<protein>
    <recommendedName>
        <fullName evidence="1">Phosphate import ATP-binding protein PstB 2</fullName>
        <ecNumber evidence="1">7.3.2.1</ecNumber>
    </recommendedName>
    <alternativeName>
        <fullName evidence="1">ABC phosphate transporter 2</fullName>
    </alternativeName>
    <alternativeName>
        <fullName evidence="1">Phosphate-transporting ATPase 2</fullName>
    </alternativeName>
</protein>
<evidence type="ECO:0000255" key="1">
    <source>
        <dbReference type="HAMAP-Rule" id="MF_01702"/>
    </source>
</evidence>
<dbReference type="EC" id="7.3.2.1" evidence="1"/>
<dbReference type="EMBL" id="AL591983">
    <property type="protein sequence ID" value="CAD00574.1"/>
    <property type="molecule type" value="Genomic_DNA"/>
</dbReference>
<dbReference type="PIR" id="AH1386">
    <property type="entry name" value="AH1386"/>
</dbReference>
<dbReference type="RefSeq" id="NP_466019.1">
    <property type="nucleotide sequence ID" value="NC_003210.1"/>
</dbReference>
<dbReference type="RefSeq" id="WP_010990004.1">
    <property type="nucleotide sequence ID" value="NC_003210.1"/>
</dbReference>
<dbReference type="SMR" id="Q8Y4E9"/>
<dbReference type="STRING" id="169963.gene:17595207"/>
<dbReference type="PaxDb" id="169963-lmo2496"/>
<dbReference type="EnsemblBacteria" id="CAD00574">
    <property type="protein sequence ID" value="CAD00574"/>
    <property type="gene ID" value="CAD00574"/>
</dbReference>
<dbReference type="GeneID" id="987313"/>
<dbReference type="KEGG" id="lmo:lmo2496"/>
<dbReference type="PATRIC" id="fig|169963.11.peg.2556"/>
<dbReference type="eggNOG" id="COG1117">
    <property type="taxonomic scope" value="Bacteria"/>
</dbReference>
<dbReference type="HOGENOM" id="CLU_000604_1_22_9"/>
<dbReference type="OrthoDB" id="9802185at2"/>
<dbReference type="PhylomeDB" id="Q8Y4E9"/>
<dbReference type="BioCyc" id="LMON169963:LMO2496-MONOMER"/>
<dbReference type="Proteomes" id="UP000000817">
    <property type="component" value="Chromosome"/>
</dbReference>
<dbReference type="GO" id="GO:0005886">
    <property type="term" value="C:plasma membrane"/>
    <property type="evidence" value="ECO:0007669"/>
    <property type="project" value="UniProtKB-SubCell"/>
</dbReference>
<dbReference type="GO" id="GO:0005524">
    <property type="term" value="F:ATP binding"/>
    <property type="evidence" value="ECO:0007669"/>
    <property type="project" value="UniProtKB-KW"/>
</dbReference>
<dbReference type="GO" id="GO:0016887">
    <property type="term" value="F:ATP hydrolysis activity"/>
    <property type="evidence" value="ECO:0007669"/>
    <property type="project" value="InterPro"/>
</dbReference>
<dbReference type="GO" id="GO:0015415">
    <property type="term" value="F:ATPase-coupled phosphate ion transmembrane transporter activity"/>
    <property type="evidence" value="ECO:0007669"/>
    <property type="project" value="UniProtKB-EC"/>
</dbReference>
<dbReference type="GO" id="GO:0035435">
    <property type="term" value="P:phosphate ion transmembrane transport"/>
    <property type="evidence" value="ECO:0007669"/>
    <property type="project" value="InterPro"/>
</dbReference>
<dbReference type="CDD" id="cd03260">
    <property type="entry name" value="ABC_PstB_phosphate_transporter"/>
    <property type="match status" value="1"/>
</dbReference>
<dbReference type="FunFam" id="3.40.50.300:FF:000132">
    <property type="entry name" value="Phosphate import ATP-binding protein PstB"/>
    <property type="match status" value="1"/>
</dbReference>
<dbReference type="Gene3D" id="3.40.50.300">
    <property type="entry name" value="P-loop containing nucleotide triphosphate hydrolases"/>
    <property type="match status" value="1"/>
</dbReference>
<dbReference type="InterPro" id="IPR003593">
    <property type="entry name" value="AAA+_ATPase"/>
</dbReference>
<dbReference type="InterPro" id="IPR003439">
    <property type="entry name" value="ABC_transporter-like_ATP-bd"/>
</dbReference>
<dbReference type="InterPro" id="IPR017871">
    <property type="entry name" value="ABC_transporter-like_CS"/>
</dbReference>
<dbReference type="InterPro" id="IPR027417">
    <property type="entry name" value="P-loop_NTPase"/>
</dbReference>
<dbReference type="InterPro" id="IPR005670">
    <property type="entry name" value="PstB-like"/>
</dbReference>
<dbReference type="NCBIfam" id="TIGR00972">
    <property type="entry name" value="3a0107s01c2"/>
    <property type="match status" value="1"/>
</dbReference>
<dbReference type="PANTHER" id="PTHR43423">
    <property type="entry name" value="ABC TRANSPORTER I FAMILY MEMBER 17"/>
    <property type="match status" value="1"/>
</dbReference>
<dbReference type="PANTHER" id="PTHR43423:SF10">
    <property type="entry name" value="PHOSPHATE IMPORT ATP-BINDING PROTEIN PSTB 2"/>
    <property type="match status" value="1"/>
</dbReference>
<dbReference type="Pfam" id="PF00005">
    <property type="entry name" value="ABC_tran"/>
    <property type="match status" value="1"/>
</dbReference>
<dbReference type="SMART" id="SM00382">
    <property type="entry name" value="AAA"/>
    <property type="match status" value="1"/>
</dbReference>
<dbReference type="SUPFAM" id="SSF52540">
    <property type="entry name" value="P-loop containing nucleoside triphosphate hydrolases"/>
    <property type="match status" value="1"/>
</dbReference>
<dbReference type="PROSITE" id="PS00211">
    <property type="entry name" value="ABC_TRANSPORTER_1"/>
    <property type="match status" value="1"/>
</dbReference>
<dbReference type="PROSITE" id="PS50893">
    <property type="entry name" value="ABC_TRANSPORTER_2"/>
    <property type="match status" value="1"/>
</dbReference>
<dbReference type="PROSITE" id="PS51238">
    <property type="entry name" value="PSTB"/>
    <property type="match status" value="1"/>
</dbReference>
<name>PSTB2_LISMO</name>
<proteinExistence type="inferred from homology"/>
<accession>Q8Y4E9</accession>
<keyword id="KW-0067">ATP-binding</keyword>
<keyword id="KW-1003">Cell membrane</keyword>
<keyword id="KW-0472">Membrane</keyword>
<keyword id="KW-0547">Nucleotide-binding</keyword>
<keyword id="KW-0592">Phosphate transport</keyword>
<keyword id="KW-1185">Reference proteome</keyword>
<keyword id="KW-1278">Translocase</keyword>
<keyword id="KW-0813">Transport</keyword>
<reference key="1">
    <citation type="journal article" date="2001" name="Science">
        <title>Comparative genomics of Listeria species.</title>
        <authorList>
            <person name="Glaser P."/>
            <person name="Frangeul L."/>
            <person name="Buchrieser C."/>
            <person name="Rusniok C."/>
            <person name="Amend A."/>
            <person name="Baquero F."/>
            <person name="Berche P."/>
            <person name="Bloecker H."/>
            <person name="Brandt P."/>
            <person name="Chakraborty T."/>
            <person name="Charbit A."/>
            <person name="Chetouani F."/>
            <person name="Couve E."/>
            <person name="de Daruvar A."/>
            <person name="Dehoux P."/>
            <person name="Domann E."/>
            <person name="Dominguez-Bernal G."/>
            <person name="Duchaud E."/>
            <person name="Durant L."/>
            <person name="Dussurget O."/>
            <person name="Entian K.-D."/>
            <person name="Fsihi H."/>
            <person name="Garcia-del Portillo F."/>
            <person name="Garrido P."/>
            <person name="Gautier L."/>
            <person name="Goebel W."/>
            <person name="Gomez-Lopez N."/>
            <person name="Hain T."/>
            <person name="Hauf J."/>
            <person name="Jackson D."/>
            <person name="Jones L.-M."/>
            <person name="Kaerst U."/>
            <person name="Kreft J."/>
            <person name="Kuhn M."/>
            <person name="Kunst F."/>
            <person name="Kurapkat G."/>
            <person name="Madueno E."/>
            <person name="Maitournam A."/>
            <person name="Mata Vicente J."/>
            <person name="Ng E."/>
            <person name="Nedjari H."/>
            <person name="Nordsiek G."/>
            <person name="Novella S."/>
            <person name="de Pablos B."/>
            <person name="Perez-Diaz J.-C."/>
            <person name="Purcell R."/>
            <person name="Remmel B."/>
            <person name="Rose M."/>
            <person name="Schlueter T."/>
            <person name="Simoes N."/>
            <person name="Tierrez A."/>
            <person name="Vazquez-Boland J.-A."/>
            <person name="Voss H."/>
            <person name="Wehland J."/>
            <person name="Cossart P."/>
        </authorList>
    </citation>
    <scope>NUCLEOTIDE SEQUENCE [LARGE SCALE GENOMIC DNA]</scope>
    <source>
        <strain>ATCC BAA-679 / EGD-e</strain>
    </source>
</reference>
<gene>
    <name evidence="1" type="primary">pstB2</name>
    <name type="ordered locus">lmo2496</name>
</gene>
<comment type="function">
    <text evidence="1">Part of the ABC transporter complex PstSACB involved in phosphate import. Responsible for energy coupling to the transport system.</text>
</comment>
<comment type="catalytic activity">
    <reaction evidence="1">
        <text>phosphate(out) + ATP + H2O = ADP + 2 phosphate(in) + H(+)</text>
        <dbReference type="Rhea" id="RHEA:24440"/>
        <dbReference type="ChEBI" id="CHEBI:15377"/>
        <dbReference type="ChEBI" id="CHEBI:15378"/>
        <dbReference type="ChEBI" id="CHEBI:30616"/>
        <dbReference type="ChEBI" id="CHEBI:43474"/>
        <dbReference type="ChEBI" id="CHEBI:456216"/>
        <dbReference type="EC" id="7.3.2.1"/>
    </reaction>
</comment>
<comment type="subunit">
    <text evidence="1">The complex is composed of two ATP-binding proteins (PstB), two transmembrane proteins (PstC and PstA) and a solute-binding protein (PstS).</text>
</comment>
<comment type="subcellular location">
    <subcellularLocation>
        <location evidence="1">Cell membrane</location>
        <topology evidence="1">Peripheral membrane protein</topology>
    </subcellularLocation>
</comment>
<comment type="similarity">
    <text evidence="1">Belongs to the ABC transporter superfamily. Phosphate importer (TC 3.A.1.7) family.</text>
</comment>
<organism>
    <name type="scientific">Listeria monocytogenes serovar 1/2a (strain ATCC BAA-679 / EGD-e)</name>
    <dbReference type="NCBI Taxonomy" id="169963"/>
    <lineage>
        <taxon>Bacteria</taxon>
        <taxon>Bacillati</taxon>
        <taxon>Bacillota</taxon>
        <taxon>Bacilli</taxon>
        <taxon>Bacillales</taxon>
        <taxon>Listeriaceae</taxon>
        <taxon>Listeria</taxon>
    </lineage>
</organism>
<sequence length="271" mass="30437">MLTKKPEINTILQVTPDPHSLPAAMATEDLHVYYGDNHAIKGVDLTFPENKVTALIGPSGCGKSTYLRALNRMNDEIDGCRMEGQILYDGININRKEVDLYNVRKEIGMVFQKPNPFTKSIYENVAFGLKRHGMKNKKEIMERVEKSLRRAALWDEVKDDLGKSALSLSGGQQQRLCIARAVAMQPKVLLLDEPASALDPISTSKIEDLINELKNKYTIIIVTHNMQQAARVSDYTSFFYLGEVVEFSGTSELFTNPQEKQTEDYISGNFG</sequence>
<feature type="chain" id="PRO_0000092834" description="Phosphate import ATP-binding protein PstB 2">
    <location>
        <begin position="1"/>
        <end position="271"/>
    </location>
</feature>
<feature type="domain" description="ABC transporter" evidence="1">
    <location>
        <begin position="25"/>
        <end position="266"/>
    </location>
</feature>
<feature type="binding site" evidence="1">
    <location>
        <begin position="57"/>
        <end position="64"/>
    </location>
    <ligand>
        <name>ATP</name>
        <dbReference type="ChEBI" id="CHEBI:30616"/>
    </ligand>
</feature>